<keyword id="KW-0150">Chloroplast</keyword>
<keyword id="KW-0934">Plastid</keyword>
<keyword id="KW-0687">Ribonucleoprotein</keyword>
<keyword id="KW-0689">Ribosomal protein</keyword>
<keyword id="KW-0694">RNA-binding</keyword>
<keyword id="KW-0699">rRNA-binding</keyword>
<reference key="1">
    <citation type="journal article" date="1984" name="Nucleic Acids Res.">
        <title>The genes for the ribosomal proteins S12 and S7 are clustered with the gene for the EF-Tu protein on the chloroplast genome of Euglena gracilis.</title>
        <authorList>
            <person name="Montandon P.-E."/>
            <person name="Stutz E."/>
        </authorList>
    </citation>
    <scope>NUCLEOTIDE SEQUENCE [GENOMIC DNA]</scope>
    <source>
        <strain>Z / UTEX 753</strain>
    </source>
</reference>
<reference key="2">
    <citation type="journal article" date="1987" name="Nucleic Acids Res.">
        <title>Euglena gracilis chloroplast DNA: the untranslated leader of tufA-ORF206 gene contains an intron.</title>
        <authorList>
            <person name="Montandon P.-E."/>
            <person name="Knuchel-Aegerter C."/>
            <person name="Stutz E."/>
        </authorList>
    </citation>
    <scope>NUCLEOTIDE SEQUENCE [GENOMIC DNA]</scope>
    <source>
        <strain>Z / UTEX 753</strain>
    </source>
</reference>
<reference key="3">
    <citation type="journal article" date="1993" name="Nucleic Acids Res.">
        <title>Complete sequence of Euglena gracilis chloroplast DNA.</title>
        <authorList>
            <person name="Hallick R.B."/>
            <person name="Hong L."/>
            <person name="Drager R.G."/>
            <person name="Favreau M.R."/>
            <person name="Monfort A."/>
            <person name="Orsat B."/>
            <person name="Spielmann A."/>
            <person name="Stutz E."/>
        </authorList>
    </citation>
    <scope>NUCLEOTIDE SEQUENCE [LARGE SCALE GENOMIC DNA]</scope>
    <source>
        <strain>Z / UTEX 753</strain>
    </source>
</reference>
<comment type="function">
    <text evidence="1">One of the primary rRNA binding proteins, it binds directly to 16S rRNA where it nucleates assembly of the head domain of the 30S subunit.</text>
</comment>
<comment type="subunit">
    <text>Part of the 30S ribosomal subunit.</text>
</comment>
<comment type="subcellular location">
    <subcellularLocation>
        <location>Plastid</location>
        <location>Chloroplast</location>
    </subcellularLocation>
</comment>
<comment type="similarity">
    <text evidence="2">Belongs to the universal ribosomal protein uS7 family.</text>
</comment>
<protein>
    <recommendedName>
        <fullName evidence="2">Small ribosomal subunit protein uS7c</fullName>
    </recommendedName>
    <alternativeName>
        <fullName>30S ribosomal protein S7, chloroplastic</fullName>
    </alternativeName>
</protein>
<accession>P02360</accession>
<organism>
    <name type="scientific">Euglena gracilis</name>
    <dbReference type="NCBI Taxonomy" id="3039"/>
    <lineage>
        <taxon>Eukaryota</taxon>
        <taxon>Discoba</taxon>
        <taxon>Euglenozoa</taxon>
        <taxon>Euglenida</taxon>
        <taxon>Spirocuta</taxon>
        <taxon>Euglenophyceae</taxon>
        <taxon>Euglenales</taxon>
        <taxon>Euglenaceae</taxon>
        <taxon>Euglena</taxon>
    </lineage>
</organism>
<evidence type="ECO:0000250" key="1"/>
<evidence type="ECO:0000305" key="2"/>
<feature type="initiator methionine" description="Removed" evidence="1">
    <location>
        <position position="1"/>
    </location>
</feature>
<feature type="chain" id="PRO_0000124454" description="Small ribosomal subunit protein uS7c">
    <location>
        <begin position="2"/>
        <end position="156"/>
    </location>
</feature>
<name>RR7_EUGGR</name>
<proteinExistence type="inferred from homology"/>
<gene>
    <name type="primary">rps7</name>
</gene>
<geneLocation type="chloroplast"/>
<sequence length="156" mass="17983">MSRRRRAKKRIISQDPIYNSTLASKVINKILLNGKKTLAQYIFYETMKNIQEIYKKDPLDILRKAIKNASPQMETRKRRIGGTIYQVPVEVKEDRGTSLALKFIIEKARERKGRGISTKLKNEIIDASNNTGEAVKKKEEIHKTAEANKAFSNMKF</sequence>
<dbReference type="EMBL" id="Z11874">
    <property type="protein sequence ID" value="CAA77905.1"/>
    <property type="molecule type" value="Genomic_DNA"/>
</dbReference>
<dbReference type="EMBL" id="X00480">
    <property type="protein sequence ID" value="CAA25158.1"/>
    <property type="molecule type" value="Genomic_DNA"/>
</dbReference>
<dbReference type="EMBL" id="X06254">
    <property type="protein sequence ID" value="CAA29598.1"/>
    <property type="molecule type" value="Genomic_DNA"/>
</dbReference>
<dbReference type="EMBL" id="X70810">
    <property type="protein sequence ID" value="CAA50088.1"/>
    <property type="molecule type" value="Genomic_DNA"/>
</dbReference>
<dbReference type="PIR" id="A02711">
    <property type="entry name" value="R3EG7"/>
</dbReference>
<dbReference type="RefSeq" id="NP_041901.1">
    <property type="nucleotide sequence ID" value="NC_001603.2"/>
</dbReference>
<dbReference type="SMR" id="P02360"/>
<dbReference type="GeneID" id="807525"/>
<dbReference type="GO" id="GO:0009507">
    <property type="term" value="C:chloroplast"/>
    <property type="evidence" value="ECO:0007669"/>
    <property type="project" value="UniProtKB-SubCell"/>
</dbReference>
<dbReference type="GO" id="GO:0015935">
    <property type="term" value="C:small ribosomal subunit"/>
    <property type="evidence" value="ECO:0007669"/>
    <property type="project" value="InterPro"/>
</dbReference>
<dbReference type="GO" id="GO:0019843">
    <property type="term" value="F:rRNA binding"/>
    <property type="evidence" value="ECO:0007669"/>
    <property type="project" value="UniProtKB-UniRule"/>
</dbReference>
<dbReference type="GO" id="GO:0003735">
    <property type="term" value="F:structural constituent of ribosome"/>
    <property type="evidence" value="ECO:0007669"/>
    <property type="project" value="InterPro"/>
</dbReference>
<dbReference type="GO" id="GO:0006412">
    <property type="term" value="P:translation"/>
    <property type="evidence" value="ECO:0007669"/>
    <property type="project" value="UniProtKB-UniRule"/>
</dbReference>
<dbReference type="CDD" id="cd14869">
    <property type="entry name" value="uS7_Bacteria"/>
    <property type="match status" value="1"/>
</dbReference>
<dbReference type="FunFam" id="1.10.455.10:FF:000001">
    <property type="entry name" value="30S ribosomal protein S7"/>
    <property type="match status" value="1"/>
</dbReference>
<dbReference type="Gene3D" id="1.10.455.10">
    <property type="entry name" value="Ribosomal protein S7 domain"/>
    <property type="match status" value="1"/>
</dbReference>
<dbReference type="HAMAP" id="MF_00480_B">
    <property type="entry name" value="Ribosomal_uS7_B"/>
    <property type="match status" value="1"/>
</dbReference>
<dbReference type="InterPro" id="IPR000235">
    <property type="entry name" value="Ribosomal_uS7"/>
</dbReference>
<dbReference type="InterPro" id="IPR005717">
    <property type="entry name" value="Ribosomal_uS7_bac/org-type"/>
</dbReference>
<dbReference type="InterPro" id="IPR020606">
    <property type="entry name" value="Ribosomal_uS7_CS"/>
</dbReference>
<dbReference type="InterPro" id="IPR023798">
    <property type="entry name" value="Ribosomal_uS7_dom"/>
</dbReference>
<dbReference type="InterPro" id="IPR036823">
    <property type="entry name" value="Ribosomal_uS7_dom_sf"/>
</dbReference>
<dbReference type="NCBIfam" id="TIGR01029">
    <property type="entry name" value="rpsG_bact"/>
    <property type="match status" value="1"/>
</dbReference>
<dbReference type="PANTHER" id="PTHR11205">
    <property type="entry name" value="RIBOSOMAL PROTEIN S7"/>
    <property type="match status" value="1"/>
</dbReference>
<dbReference type="Pfam" id="PF00177">
    <property type="entry name" value="Ribosomal_S7"/>
    <property type="match status" value="1"/>
</dbReference>
<dbReference type="PIRSF" id="PIRSF002122">
    <property type="entry name" value="RPS7p_RPS7a_RPS5e_RPS7o"/>
    <property type="match status" value="1"/>
</dbReference>
<dbReference type="SUPFAM" id="SSF47973">
    <property type="entry name" value="Ribosomal protein S7"/>
    <property type="match status" value="1"/>
</dbReference>
<dbReference type="PROSITE" id="PS00052">
    <property type="entry name" value="RIBOSOMAL_S7"/>
    <property type="match status" value="1"/>
</dbReference>